<reference key="1">
    <citation type="journal article" date="2007" name="Nature">
        <title>Evolution of genes and genomes on the Drosophila phylogeny.</title>
        <authorList>
            <consortium name="Drosophila 12 genomes consortium"/>
        </authorList>
    </citation>
    <scope>NUCLEOTIDE SEQUENCE [LARGE SCALE GENOMIC DNA]</scope>
    <source>
        <strain>Tucson 15287-2541.00</strain>
    </source>
</reference>
<name>NUBP1_DROGR</name>
<accession>B4JBI7</accession>
<protein>
    <recommendedName>
        <fullName evidence="2">Cytosolic Fe-S cluster assembly factor Nubp1 homolog</fullName>
    </recommendedName>
</protein>
<gene>
    <name evidence="1" type="primary">Nubp1</name>
    <name type="ORF">GH11560</name>
</gene>
<proteinExistence type="inferred from homology"/>
<sequence>MQAPPPEHCPGVESEQAGRVSACAGCPNQSICSDPTKKLEDPGKALVAAAMKDVKHKLLILSGKGGVGKSTVTTLLTRYLARSCPDNNFGVLDIDICGPSQPRLLGALGENVHQSGSGWSPVGIDDNVCLMSIGFLLSSVDDAIIWRGPKKNGMIRQFLSEVDWGNLDLLLLDTPPGTSDEHLSVCTYLRDDSAPKDSLSAIIVTTPQEVALLDVRKEINFCRKQRIPILGVIENMSSFRCGHCGNSSDIFPAKTGGAAAMCAEMEVPLLGSLPLDPRVTRACDAGEDITAMKSETTDALAAICSKIMSSF</sequence>
<feature type="chain" id="PRO_0000382603" description="Cytosolic Fe-S cluster assembly factor Nubp1 homolog">
    <location>
        <begin position="1"/>
        <end position="311"/>
    </location>
</feature>
<feature type="binding site" evidence="2">
    <location>
        <position position="9"/>
    </location>
    <ligand>
        <name>[4Fe-4S] cluster</name>
        <dbReference type="ChEBI" id="CHEBI:49883"/>
        <label>1</label>
    </ligand>
</feature>
<feature type="binding site" evidence="2">
    <location>
        <position position="23"/>
    </location>
    <ligand>
        <name>[4Fe-4S] cluster</name>
        <dbReference type="ChEBI" id="CHEBI:49883"/>
        <label>1</label>
    </ligand>
</feature>
<feature type="binding site" evidence="2">
    <location>
        <position position="26"/>
    </location>
    <ligand>
        <name>[4Fe-4S] cluster</name>
        <dbReference type="ChEBI" id="CHEBI:49883"/>
        <label>1</label>
    </ligand>
</feature>
<feature type="binding site" evidence="2">
    <location>
        <position position="32"/>
    </location>
    <ligand>
        <name>[4Fe-4S] cluster</name>
        <dbReference type="ChEBI" id="CHEBI:49883"/>
        <label>1</label>
    </ligand>
</feature>
<feature type="binding site" evidence="2">
    <location>
        <begin position="63"/>
        <end position="70"/>
    </location>
    <ligand>
        <name>ATP</name>
        <dbReference type="ChEBI" id="CHEBI:30616"/>
    </ligand>
</feature>
<feature type="binding site" evidence="2">
    <location>
        <position position="241"/>
    </location>
    <ligand>
        <name>[4Fe-4S] cluster</name>
        <dbReference type="ChEBI" id="CHEBI:49883"/>
        <label>2</label>
        <note>ligand shared with heterodimeric partner</note>
    </ligand>
</feature>
<feature type="binding site" evidence="2">
    <location>
        <position position="244"/>
    </location>
    <ligand>
        <name>[4Fe-4S] cluster</name>
        <dbReference type="ChEBI" id="CHEBI:49883"/>
        <label>2</label>
        <note>ligand shared with heterodimeric partner</note>
    </ligand>
</feature>
<organism>
    <name type="scientific">Drosophila grimshawi</name>
    <name type="common">Hawaiian fruit fly</name>
    <name type="synonym">Idiomyia grimshawi</name>
    <dbReference type="NCBI Taxonomy" id="7222"/>
    <lineage>
        <taxon>Eukaryota</taxon>
        <taxon>Metazoa</taxon>
        <taxon>Ecdysozoa</taxon>
        <taxon>Arthropoda</taxon>
        <taxon>Hexapoda</taxon>
        <taxon>Insecta</taxon>
        <taxon>Pterygota</taxon>
        <taxon>Neoptera</taxon>
        <taxon>Endopterygota</taxon>
        <taxon>Diptera</taxon>
        <taxon>Brachycera</taxon>
        <taxon>Muscomorpha</taxon>
        <taxon>Ephydroidea</taxon>
        <taxon>Drosophilidae</taxon>
        <taxon>Drosophila</taxon>
        <taxon>Hawaiian Drosophila</taxon>
    </lineage>
</organism>
<dbReference type="EMBL" id="CH916368">
    <property type="protein sequence ID" value="EDW04010.1"/>
    <property type="molecule type" value="Genomic_DNA"/>
</dbReference>
<dbReference type="SMR" id="B4JBI7"/>
<dbReference type="FunCoup" id="B4JBI7">
    <property type="interactions" value="802"/>
</dbReference>
<dbReference type="STRING" id="7222.B4JBI7"/>
<dbReference type="EnsemblMetazoa" id="FBtr0146974">
    <property type="protein sequence ID" value="FBpp0145466"/>
    <property type="gene ID" value="FBgn0119040"/>
</dbReference>
<dbReference type="EnsemblMetazoa" id="XM_001989107.2">
    <property type="protein sequence ID" value="XP_001989143.1"/>
    <property type="gene ID" value="LOC6562932"/>
</dbReference>
<dbReference type="GeneID" id="6562932"/>
<dbReference type="KEGG" id="dgr:6562932"/>
<dbReference type="CTD" id="4682"/>
<dbReference type="eggNOG" id="KOG3022">
    <property type="taxonomic scope" value="Eukaryota"/>
</dbReference>
<dbReference type="HOGENOM" id="CLU_024839_0_1_1"/>
<dbReference type="InParanoid" id="B4JBI7"/>
<dbReference type="OMA" id="VSGCPMR"/>
<dbReference type="OrthoDB" id="1741334at2759"/>
<dbReference type="PhylomeDB" id="B4JBI7"/>
<dbReference type="Proteomes" id="UP000001070">
    <property type="component" value="Unassembled WGS sequence"/>
</dbReference>
<dbReference type="GO" id="GO:0005829">
    <property type="term" value="C:cytosol"/>
    <property type="evidence" value="ECO:0000250"/>
    <property type="project" value="UniProtKB"/>
</dbReference>
<dbReference type="GO" id="GO:0051539">
    <property type="term" value="F:4 iron, 4 sulfur cluster binding"/>
    <property type="evidence" value="ECO:0007669"/>
    <property type="project" value="UniProtKB-UniRule"/>
</dbReference>
<dbReference type="GO" id="GO:0005524">
    <property type="term" value="F:ATP binding"/>
    <property type="evidence" value="ECO:0007669"/>
    <property type="project" value="UniProtKB-KW"/>
</dbReference>
<dbReference type="GO" id="GO:0140663">
    <property type="term" value="F:ATP-dependent FeS chaperone activity"/>
    <property type="evidence" value="ECO:0007669"/>
    <property type="project" value="InterPro"/>
</dbReference>
<dbReference type="GO" id="GO:0051536">
    <property type="term" value="F:iron-sulfur cluster binding"/>
    <property type="evidence" value="ECO:0000250"/>
    <property type="project" value="UniProtKB"/>
</dbReference>
<dbReference type="GO" id="GO:0046872">
    <property type="term" value="F:metal ion binding"/>
    <property type="evidence" value="ECO:0007669"/>
    <property type="project" value="UniProtKB-KW"/>
</dbReference>
<dbReference type="GO" id="GO:0016226">
    <property type="term" value="P:iron-sulfur cluster assembly"/>
    <property type="evidence" value="ECO:0000250"/>
    <property type="project" value="UniProtKB"/>
</dbReference>
<dbReference type="CDD" id="cd02037">
    <property type="entry name" value="Mrp_NBP35"/>
    <property type="match status" value="1"/>
</dbReference>
<dbReference type="FunFam" id="3.40.50.300:FF:001759">
    <property type="entry name" value="Cytosolic Fe-S cluster assembly factor NUBP1 homolog"/>
    <property type="match status" value="1"/>
</dbReference>
<dbReference type="Gene3D" id="3.40.50.300">
    <property type="entry name" value="P-loop containing nucleotide triphosphate hydrolases"/>
    <property type="match status" value="1"/>
</dbReference>
<dbReference type="HAMAP" id="MF_02040">
    <property type="entry name" value="Mrp_NBP35"/>
    <property type="match status" value="1"/>
</dbReference>
<dbReference type="HAMAP" id="MF_03038">
    <property type="entry name" value="NUBP1"/>
    <property type="match status" value="1"/>
</dbReference>
<dbReference type="InterPro" id="IPR019591">
    <property type="entry name" value="Mrp/NBP35_ATP-bd"/>
</dbReference>
<dbReference type="InterPro" id="IPR028601">
    <property type="entry name" value="NUBP1/Nbp35"/>
</dbReference>
<dbReference type="InterPro" id="IPR027417">
    <property type="entry name" value="P-loop_NTPase"/>
</dbReference>
<dbReference type="InterPro" id="IPR033756">
    <property type="entry name" value="YlxH/NBP35"/>
</dbReference>
<dbReference type="PANTHER" id="PTHR23264:SF35">
    <property type="entry name" value="CYTOSOLIC FE-S CLUSTER ASSEMBLY FACTOR NUBP1"/>
    <property type="match status" value="1"/>
</dbReference>
<dbReference type="PANTHER" id="PTHR23264">
    <property type="entry name" value="NUCLEOTIDE-BINDING PROTEIN NBP35 YEAST -RELATED"/>
    <property type="match status" value="1"/>
</dbReference>
<dbReference type="Pfam" id="PF10609">
    <property type="entry name" value="ParA"/>
    <property type="match status" value="1"/>
</dbReference>
<dbReference type="SUPFAM" id="SSF52540">
    <property type="entry name" value="P-loop containing nucleoside triphosphate hydrolases"/>
    <property type="match status" value="1"/>
</dbReference>
<comment type="function">
    <text evidence="2">Component of the cytosolic iron-sulfur (Fe/S) protein assembly (CIA) machinery. Required for maturation of extramitochondrial Fe-S proteins. The Nubp1-Nubp2 heterotetramer forms a Fe-S scaffold complex, mediating the de novo assembly of an Fe-S cluster and its transfer to target apoproteins.</text>
</comment>
<comment type="cofactor">
    <cofactor evidence="2">
        <name>[4Fe-4S] cluster</name>
        <dbReference type="ChEBI" id="CHEBI:49883"/>
    </cofactor>
    <text evidence="2">Binds 4 [4Fe-4S] clusters per heterotetramer. Contains two stable clusters in the N-termini of Nubp1 and two labile, bridging clusters between subunits of the Nubp1-Nubp2 heterotetramer.</text>
</comment>
<comment type="subunit">
    <text evidence="2">Heterotetramer of 2 Nubp1 and 2 Nubp2 chains.</text>
</comment>
<comment type="subcellular location">
    <subcellularLocation>
        <location evidence="2">Cytoplasm</location>
    </subcellularLocation>
</comment>
<comment type="similarity">
    <text evidence="2">Belongs to the Mrp/NBP35 ATP-binding proteins family. NUBP1/NBP35 subfamily.</text>
</comment>
<evidence type="ECO:0000250" key="1">
    <source>
        <dbReference type="UniProtKB" id="Q9VJI9"/>
    </source>
</evidence>
<evidence type="ECO:0000255" key="2">
    <source>
        <dbReference type="HAMAP-Rule" id="MF_03038"/>
    </source>
</evidence>
<keyword id="KW-0004">4Fe-4S</keyword>
<keyword id="KW-0067">ATP-binding</keyword>
<keyword id="KW-0963">Cytoplasm</keyword>
<keyword id="KW-0408">Iron</keyword>
<keyword id="KW-0411">Iron-sulfur</keyword>
<keyword id="KW-0479">Metal-binding</keyword>
<keyword id="KW-0547">Nucleotide-binding</keyword>
<keyword id="KW-1185">Reference proteome</keyword>